<keyword id="KW-0963">Cytoplasm</keyword>
<keyword id="KW-0690">Ribosome biogenesis</keyword>
<dbReference type="EMBL" id="AL596168">
    <property type="protein sequence ID" value="CAC96595.1"/>
    <property type="molecule type" value="Genomic_DNA"/>
</dbReference>
<dbReference type="PIR" id="AC1603">
    <property type="entry name" value="AC1603"/>
</dbReference>
<dbReference type="RefSeq" id="WP_010991497.1">
    <property type="nucleotide sequence ID" value="NC_003212.1"/>
</dbReference>
<dbReference type="SMR" id="Q92C27"/>
<dbReference type="STRING" id="272626.gene:17565695"/>
<dbReference type="GeneID" id="93234744"/>
<dbReference type="KEGG" id="lin:rbfA"/>
<dbReference type="eggNOG" id="COG0858">
    <property type="taxonomic scope" value="Bacteria"/>
</dbReference>
<dbReference type="HOGENOM" id="CLU_089475_6_3_9"/>
<dbReference type="OrthoDB" id="307788at2"/>
<dbReference type="Proteomes" id="UP000002513">
    <property type="component" value="Chromosome"/>
</dbReference>
<dbReference type="GO" id="GO:0005829">
    <property type="term" value="C:cytosol"/>
    <property type="evidence" value="ECO:0007669"/>
    <property type="project" value="TreeGrafter"/>
</dbReference>
<dbReference type="GO" id="GO:0043024">
    <property type="term" value="F:ribosomal small subunit binding"/>
    <property type="evidence" value="ECO:0007669"/>
    <property type="project" value="TreeGrafter"/>
</dbReference>
<dbReference type="GO" id="GO:0030490">
    <property type="term" value="P:maturation of SSU-rRNA"/>
    <property type="evidence" value="ECO:0007669"/>
    <property type="project" value="UniProtKB-UniRule"/>
</dbReference>
<dbReference type="FunFam" id="3.30.300.20:FF:000009">
    <property type="entry name" value="Ribosome-binding factor A"/>
    <property type="match status" value="1"/>
</dbReference>
<dbReference type="Gene3D" id="3.30.300.20">
    <property type="match status" value="1"/>
</dbReference>
<dbReference type="HAMAP" id="MF_00003">
    <property type="entry name" value="RbfA"/>
    <property type="match status" value="1"/>
</dbReference>
<dbReference type="InterPro" id="IPR015946">
    <property type="entry name" value="KH_dom-like_a/b"/>
</dbReference>
<dbReference type="InterPro" id="IPR000238">
    <property type="entry name" value="RbfA"/>
</dbReference>
<dbReference type="InterPro" id="IPR023799">
    <property type="entry name" value="RbfA_dom_sf"/>
</dbReference>
<dbReference type="InterPro" id="IPR020053">
    <property type="entry name" value="Ribosome-bd_factorA_CS"/>
</dbReference>
<dbReference type="NCBIfam" id="TIGR00082">
    <property type="entry name" value="rbfA"/>
    <property type="match status" value="1"/>
</dbReference>
<dbReference type="PANTHER" id="PTHR33515">
    <property type="entry name" value="RIBOSOME-BINDING FACTOR A, CHLOROPLASTIC-RELATED"/>
    <property type="match status" value="1"/>
</dbReference>
<dbReference type="PANTHER" id="PTHR33515:SF1">
    <property type="entry name" value="RIBOSOME-BINDING FACTOR A, CHLOROPLASTIC-RELATED"/>
    <property type="match status" value="1"/>
</dbReference>
<dbReference type="Pfam" id="PF02033">
    <property type="entry name" value="RBFA"/>
    <property type="match status" value="1"/>
</dbReference>
<dbReference type="SUPFAM" id="SSF89919">
    <property type="entry name" value="Ribosome-binding factor A, RbfA"/>
    <property type="match status" value="1"/>
</dbReference>
<dbReference type="PROSITE" id="PS01319">
    <property type="entry name" value="RBFA"/>
    <property type="match status" value="1"/>
</dbReference>
<name>RBFA_LISIN</name>
<comment type="function">
    <text evidence="1">One of several proteins that assist in the late maturation steps of the functional core of the 30S ribosomal subunit. Associates with free 30S ribosomal subunits (but not with 30S subunits that are part of 70S ribosomes or polysomes). Required for efficient processing of 16S rRNA. May interact with the 5'-terminal helix region of 16S rRNA.</text>
</comment>
<comment type="subunit">
    <text evidence="1">Monomer. Binds 30S ribosomal subunits, but not 50S ribosomal subunits or 70S ribosomes.</text>
</comment>
<comment type="subcellular location">
    <subcellularLocation>
        <location evidence="1">Cytoplasm</location>
    </subcellularLocation>
</comment>
<comment type="similarity">
    <text evidence="1">Belongs to the RbfA family.</text>
</comment>
<proteinExistence type="inferred from homology"/>
<sequence length="114" mass="13026">MNVRANRVSEQMKKELGDILNRKIKDPRLGFVTVTGVDVTGDLQEAKVFISILGTDKEKENTLLALEKAHGFIRSEIGRRIRLRKVPEMSFEIDNSIAYGNRIDELLRDLNNDQ</sequence>
<evidence type="ECO:0000255" key="1">
    <source>
        <dbReference type="HAMAP-Rule" id="MF_00003"/>
    </source>
</evidence>
<gene>
    <name evidence="1" type="primary">rbfA</name>
    <name type="ordered locus">lin1364</name>
</gene>
<reference key="1">
    <citation type="journal article" date="2001" name="Science">
        <title>Comparative genomics of Listeria species.</title>
        <authorList>
            <person name="Glaser P."/>
            <person name="Frangeul L."/>
            <person name="Buchrieser C."/>
            <person name="Rusniok C."/>
            <person name="Amend A."/>
            <person name="Baquero F."/>
            <person name="Berche P."/>
            <person name="Bloecker H."/>
            <person name="Brandt P."/>
            <person name="Chakraborty T."/>
            <person name="Charbit A."/>
            <person name="Chetouani F."/>
            <person name="Couve E."/>
            <person name="de Daruvar A."/>
            <person name="Dehoux P."/>
            <person name="Domann E."/>
            <person name="Dominguez-Bernal G."/>
            <person name="Duchaud E."/>
            <person name="Durant L."/>
            <person name="Dussurget O."/>
            <person name="Entian K.-D."/>
            <person name="Fsihi H."/>
            <person name="Garcia-del Portillo F."/>
            <person name="Garrido P."/>
            <person name="Gautier L."/>
            <person name="Goebel W."/>
            <person name="Gomez-Lopez N."/>
            <person name="Hain T."/>
            <person name="Hauf J."/>
            <person name="Jackson D."/>
            <person name="Jones L.-M."/>
            <person name="Kaerst U."/>
            <person name="Kreft J."/>
            <person name="Kuhn M."/>
            <person name="Kunst F."/>
            <person name="Kurapkat G."/>
            <person name="Madueno E."/>
            <person name="Maitournam A."/>
            <person name="Mata Vicente J."/>
            <person name="Ng E."/>
            <person name="Nedjari H."/>
            <person name="Nordsiek G."/>
            <person name="Novella S."/>
            <person name="de Pablos B."/>
            <person name="Perez-Diaz J.-C."/>
            <person name="Purcell R."/>
            <person name="Remmel B."/>
            <person name="Rose M."/>
            <person name="Schlueter T."/>
            <person name="Simoes N."/>
            <person name="Tierrez A."/>
            <person name="Vazquez-Boland J.-A."/>
            <person name="Voss H."/>
            <person name="Wehland J."/>
            <person name="Cossart P."/>
        </authorList>
    </citation>
    <scope>NUCLEOTIDE SEQUENCE [LARGE SCALE GENOMIC DNA]</scope>
    <source>
        <strain>ATCC BAA-680 / CLIP 11262</strain>
    </source>
</reference>
<protein>
    <recommendedName>
        <fullName evidence="1">Ribosome-binding factor A</fullName>
    </recommendedName>
</protein>
<organism>
    <name type="scientific">Listeria innocua serovar 6a (strain ATCC BAA-680 / CLIP 11262)</name>
    <dbReference type="NCBI Taxonomy" id="272626"/>
    <lineage>
        <taxon>Bacteria</taxon>
        <taxon>Bacillati</taxon>
        <taxon>Bacillota</taxon>
        <taxon>Bacilli</taxon>
        <taxon>Bacillales</taxon>
        <taxon>Listeriaceae</taxon>
        <taxon>Listeria</taxon>
    </lineage>
</organism>
<accession>Q92C27</accession>
<feature type="chain" id="PRO_0000102686" description="Ribosome-binding factor A">
    <location>
        <begin position="1"/>
        <end position="114"/>
    </location>
</feature>